<protein>
    <recommendedName>
        <fullName evidence="1">Large ribosomal subunit protein uL14</fullName>
    </recommendedName>
    <alternativeName>
        <fullName evidence="2">50S ribosomal protein L14</fullName>
    </alternativeName>
</protein>
<name>RL14_CHRSD</name>
<proteinExistence type="inferred from homology"/>
<evidence type="ECO:0000255" key="1">
    <source>
        <dbReference type="HAMAP-Rule" id="MF_01367"/>
    </source>
</evidence>
<evidence type="ECO:0000305" key="2"/>
<reference key="1">
    <citation type="journal article" date="2011" name="Stand. Genomic Sci.">
        <title>Complete genome sequence of the halophilic and highly halotolerant Chromohalobacter salexigens type strain (1H11(T)).</title>
        <authorList>
            <person name="Copeland A."/>
            <person name="O'Connor K."/>
            <person name="Lucas S."/>
            <person name="Lapidus A."/>
            <person name="Berry K.W."/>
            <person name="Detter J.C."/>
            <person name="Del Rio T.G."/>
            <person name="Hammon N."/>
            <person name="Dalin E."/>
            <person name="Tice H."/>
            <person name="Pitluck S."/>
            <person name="Bruce D."/>
            <person name="Goodwin L."/>
            <person name="Han C."/>
            <person name="Tapia R."/>
            <person name="Saunders E."/>
            <person name="Schmutz J."/>
            <person name="Brettin T."/>
            <person name="Larimer F."/>
            <person name="Land M."/>
            <person name="Hauser L."/>
            <person name="Vargas C."/>
            <person name="Nieto J.J."/>
            <person name="Kyrpides N.C."/>
            <person name="Ivanova N."/>
            <person name="Goker M."/>
            <person name="Klenk H.P."/>
            <person name="Csonka L.N."/>
            <person name="Woyke T."/>
        </authorList>
    </citation>
    <scope>NUCLEOTIDE SEQUENCE [LARGE SCALE GENOMIC DNA]</scope>
    <source>
        <strain>ATCC BAA-138 / DSM 3043 / CIP 106854 / NCIMB 13768 / 1H11</strain>
    </source>
</reference>
<feature type="chain" id="PRO_0000266470" description="Large ribosomal subunit protein uL14">
    <location>
        <begin position="1"/>
        <end position="123"/>
    </location>
</feature>
<sequence>MIQTQTMLDVADNSGARRVQCIKVLGGSHRRYARVGDVIKVTVKEAIPRGKVKKGQVLKAVVVRTKSGVRRTDGSLIRFDGNAAVLLHNANEQPIGTRIFGPVTRELRNEKFMKIISLAPEVL</sequence>
<dbReference type="EMBL" id="CP000285">
    <property type="protein sequence ID" value="ABE57793.1"/>
    <property type="molecule type" value="Genomic_DNA"/>
</dbReference>
<dbReference type="RefSeq" id="WP_011505739.1">
    <property type="nucleotide sequence ID" value="NC_007963.1"/>
</dbReference>
<dbReference type="SMR" id="Q1R0G5"/>
<dbReference type="STRING" id="290398.Csal_0431"/>
<dbReference type="GeneID" id="95333184"/>
<dbReference type="KEGG" id="csa:Csal_0431"/>
<dbReference type="eggNOG" id="COG0093">
    <property type="taxonomic scope" value="Bacteria"/>
</dbReference>
<dbReference type="HOGENOM" id="CLU_095071_2_1_6"/>
<dbReference type="OrthoDB" id="9806379at2"/>
<dbReference type="Proteomes" id="UP000000239">
    <property type="component" value="Chromosome"/>
</dbReference>
<dbReference type="GO" id="GO:0022625">
    <property type="term" value="C:cytosolic large ribosomal subunit"/>
    <property type="evidence" value="ECO:0007669"/>
    <property type="project" value="TreeGrafter"/>
</dbReference>
<dbReference type="GO" id="GO:0070180">
    <property type="term" value="F:large ribosomal subunit rRNA binding"/>
    <property type="evidence" value="ECO:0007669"/>
    <property type="project" value="TreeGrafter"/>
</dbReference>
<dbReference type="GO" id="GO:0003735">
    <property type="term" value="F:structural constituent of ribosome"/>
    <property type="evidence" value="ECO:0007669"/>
    <property type="project" value="InterPro"/>
</dbReference>
<dbReference type="GO" id="GO:0006412">
    <property type="term" value="P:translation"/>
    <property type="evidence" value="ECO:0007669"/>
    <property type="project" value="UniProtKB-UniRule"/>
</dbReference>
<dbReference type="CDD" id="cd00337">
    <property type="entry name" value="Ribosomal_uL14"/>
    <property type="match status" value="1"/>
</dbReference>
<dbReference type="FunFam" id="2.40.150.20:FF:000001">
    <property type="entry name" value="50S ribosomal protein L14"/>
    <property type="match status" value="1"/>
</dbReference>
<dbReference type="Gene3D" id="2.40.150.20">
    <property type="entry name" value="Ribosomal protein L14"/>
    <property type="match status" value="1"/>
</dbReference>
<dbReference type="HAMAP" id="MF_01367">
    <property type="entry name" value="Ribosomal_uL14"/>
    <property type="match status" value="1"/>
</dbReference>
<dbReference type="InterPro" id="IPR000218">
    <property type="entry name" value="Ribosomal_uL14"/>
</dbReference>
<dbReference type="InterPro" id="IPR005745">
    <property type="entry name" value="Ribosomal_uL14_bac-type"/>
</dbReference>
<dbReference type="InterPro" id="IPR019972">
    <property type="entry name" value="Ribosomal_uL14_CS"/>
</dbReference>
<dbReference type="InterPro" id="IPR036853">
    <property type="entry name" value="Ribosomal_uL14_sf"/>
</dbReference>
<dbReference type="NCBIfam" id="TIGR01067">
    <property type="entry name" value="rplN_bact"/>
    <property type="match status" value="1"/>
</dbReference>
<dbReference type="PANTHER" id="PTHR11761">
    <property type="entry name" value="50S/60S RIBOSOMAL PROTEIN L14/L23"/>
    <property type="match status" value="1"/>
</dbReference>
<dbReference type="PANTHER" id="PTHR11761:SF3">
    <property type="entry name" value="LARGE RIBOSOMAL SUBUNIT PROTEIN UL14M"/>
    <property type="match status" value="1"/>
</dbReference>
<dbReference type="Pfam" id="PF00238">
    <property type="entry name" value="Ribosomal_L14"/>
    <property type="match status" value="1"/>
</dbReference>
<dbReference type="SMART" id="SM01374">
    <property type="entry name" value="Ribosomal_L14"/>
    <property type="match status" value="1"/>
</dbReference>
<dbReference type="SUPFAM" id="SSF50193">
    <property type="entry name" value="Ribosomal protein L14"/>
    <property type="match status" value="1"/>
</dbReference>
<dbReference type="PROSITE" id="PS00049">
    <property type="entry name" value="RIBOSOMAL_L14"/>
    <property type="match status" value="1"/>
</dbReference>
<organism>
    <name type="scientific">Chromohalobacter salexigens (strain ATCC BAA-138 / DSM 3043 / CIP 106854 / NCIMB 13768 / 1H11)</name>
    <dbReference type="NCBI Taxonomy" id="290398"/>
    <lineage>
        <taxon>Bacteria</taxon>
        <taxon>Pseudomonadati</taxon>
        <taxon>Pseudomonadota</taxon>
        <taxon>Gammaproteobacteria</taxon>
        <taxon>Oceanospirillales</taxon>
        <taxon>Halomonadaceae</taxon>
        <taxon>Chromohalobacter</taxon>
    </lineage>
</organism>
<comment type="function">
    <text evidence="1">Binds to 23S rRNA. Forms part of two intersubunit bridges in the 70S ribosome.</text>
</comment>
<comment type="subunit">
    <text evidence="1">Part of the 50S ribosomal subunit. Forms a cluster with proteins L3 and L19. In the 70S ribosome, L14 and L19 interact and together make contacts with the 16S rRNA in bridges B5 and B8.</text>
</comment>
<comment type="similarity">
    <text evidence="1">Belongs to the universal ribosomal protein uL14 family.</text>
</comment>
<gene>
    <name evidence="1" type="primary">rplN</name>
    <name type="ordered locus">Csal_0431</name>
</gene>
<keyword id="KW-1185">Reference proteome</keyword>
<keyword id="KW-0687">Ribonucleoprotein</keyword>
<keyword id="KW-0689">Ribosomal protein</keyword>
<keyword id="KW-0694">RNA-binding</keyword>
<keyword id="KW-0699">rRNA-binding</keyword>
<accession>Q1R0G5</accession>